<accession>Q2FZL3</accession>
<accession>Q70UQ8</accession>
<accession>Q70UQ9</accession>
<accession>Q9EYW7</accession>
<dbReference type="EC" id="3.4.22.-"/>
<dbReference type="EMBL" id="AF309515">
    <property type="protein sequence ID" value="AAG45844.1"/>
    <property type="molecule type" value="Genomic_DNA"/>
</dbReference>
<dbReference type="EMBL" id="CP000253">
    <property type="protein sequence ID" value="ABD30112.1"/>
    <property type="molecule type" value="Genomic_DNA"/>
</dbReference>
<dbReference type="RefSeq" id="WP_001088780.1">
    <property type="nucleotide sequence ID" value="NZ_LS483365.1"/>
</dbReference>
<dbReference type="RefSeq" id="YP_499540.1">
    <property type="nucleotide sequence ID" value="NC_007795.1"/>
</dbReference>
<dbReference type="SMR" id="Q2FZL3"/>
<dbReference type="STRING" id="93061.SAOUHSC_00987"/>
<dbReference type="MEROPS" id="C47.002"/>
<dbReference type="PaxDb" id="1280-SAXN108_1045"/>
<dbReference type="GeneID" id="3920388"/>
<dbReference type="KEGG" id="sao:SAOUHSC_00987"/>
<dbReference type="PATRIC" id="fig|93061.5.peg.907"/>
<dbReference type="eggNOG" id="ENOG502ZWEC">
    <property type="taxonomic scope" value="Bacteria"/>
</dbReference>
<dbReference type="HOGENOM" id="CLU_069043_0_0_9"/>
<dbReference type="OrthoDB" id="2398168at2"/>
<dbReference type="BRENDA" id="3.4.22.48">
    <property type="organism ID" value="3352"/>
</dbReference>
<dbReference type="PHI-base" id="PHI:11230"/>
<dbReference type="PRO" id="PR:Q2FZL3"/>
<dbReference type="Proteomes" id="UP000008816">
    <property type="component" value="Chromosome"/>
</dbReference>
<dbReference type="GO" id="GO:0005576">
    <property type="term" value="C:extracellular region"/>
    <property type="evidence" value="ECO:0007669"/>
    <property type="project" value="UniProtKB-SubCell"/>
</dbReference>
<dbReference type="GO" id="GO:0008234">
    <property type="term" value="F:cysteine-type peptidase activity"/>
    <property type="evidence" value="ECO:0007669"/>
    <property type="project" value="UniProtKB-KW"/>
</dbReference>
<dbReference type="GO" id="GO:0006508">
    <property type="term" value="P:proteolysis"/>
    <property type="evidence" value="ECO:0007669"/>
    <property type="project" value="UniProtKB-KW"/>
</dbReference>
<dbReference type="Gene3D" id="3.90.70.10">
    <property type="entry name" value="Cysteine proteinases"/>
    <property type="match status" value="1"/>
</dbReference>
<dbReference type="Gene3D" id="3.10.500.10">
    <property type="entry name" value="Staphopain proregion domain"/>
    <property type="match status" value="1"/>
</dbReference>
<dbReference type="InterPro" id="IPR046350">
    <property type="entry name" value="Cystatin_sf"/>
</dbReference>
<dbReference type="InterPro" id="IPR038765">
    <property type="entry name" value="Papain-like_cys_pep_sf"/>
</dbReference>
<dbReference type="InterPro" id="IPR025660">
    <property type="entry name" value="Pept_his_AS"/>
</dbReference>
<dbReference type="InterPro" id="IPR008750">
    <property type="entry name" value="Peptidase_C47"/>
</dbReference>
<dbReference type="InterPro" id="IPR028076">
    <property type="entry name" value="Staphopain_pro"/>
</dbReference>
<dbReference type="InterPro" id="IPR037155">
    <property type="entry name" value="Staphopain_pro_sf"/>
</dbReference>
<dbReference type="Pfam" id="PF05543">
    <property type="entry name" value="Peptidase_C47"/>
    <property type="match status" value="1"/>
</dbReference>
<dbReference type="Pfam" id="PF14731">
    <property type="entry name" value="Staphopain_pro"/>
    <property type="match status" value="1"/>
</dbReference>
<dbReference type="SUPFAM" id="SSF54403">
    <property type="entry name" value="Cystatin/monellin"/>
    <property type="match status" value="1"/>
</dbReference>
<dbReference type="SUPFAM" id="SSF54001">
    <property type="entry name" value="Cysteine proteinases"/>
    <property type="match status" value="1"/>
</dbReference>
<dbReference type="PROSITE" id="PS00639">
    <property type="entry name" value="THIOL_PROTEASE_HIS"/>
    <property type="match status" value="1"/>
</dbReference>
<reference key="1">
    <citation type="journal article" date="2001" name="Infect. Immun.">
        <title>Description of Staphylococcus serine protease (ssp) operon in Staphylococcus aureus and nonpolar inactivation of sspA-encoded serine protease.</title>
        <authorList>
            <person name="Rice K."/>
            <person name="Peralta R."/>
            <person name="Bast D."/>
            <person name="de Azavedo J."/>
            <person name="McGavin M.J."/>
        </authorList>
    </citation>
    <scope>NUCLEOTIDE SEQUENCE [GENOMIC DNA]</scope>
    <scope>PROTEIN SEQUENCE OF 37-47</scope>
    <scope>CLEAVAGE BY SSPA</scope>
</reference>
<reference key="2">
    <citation type="book" date="2006" name="Gram positive pathogens, 2nd edition">
        <title>The Staphylococcus aureus NCTC 8325 genome.</title>
        <editorList>
            <person name="Fischetti V."/>
            <person name="Novick R."/>
            <person name="Ferretti J."/>
            <person name="Portnoy D."/>
            <person name="Rood J."/>
        </editorList>
        <authorList>
            <person name="Gillaspy A.F."/>
            <person name="Worrell V."/>
            <person name="Orvis J."/>
            <person name="Roe B.A."/>
            <person name="Dyer D.W."/>
            <person name="Iandolo J.J."/>
        </authorList>
    </citation>
    <scope>NUCLEOTIDE SEQUENCE [LARGE SCALE GENOMIC DNA]</scope>
    <source>
        <strain>NCTC 8325 / PS 47</strain>
    </source>
</reference>
<reference key="3">
    <citation type="journal article" date="2002" name="J. Biol. Chem.">
        <title>Identification of a novel maturation mechanism and restricted substrate specificity for the sspB cysteine protease of Staphylococcus aureus.</title>
        <authorList>
            <person name="Massimi I."/>
            <person name="Park E."/>
            <person name="Rice K."/>
            <person name="Mueller-Esterl W."/>
            <person name="Sauder D."/>
            <person name="McGavin M.J."/>
        </authorList>
    </citation>
    <scope>PROTEIN SEQUENCE OF 211-229</scope>
    <scope>FUNCTION</scope>
    <scope>ACTIVITY REGULATION</scope>
    <scope>CATALYTIC ACTIVITY</scope>
    <scope>CLEAVAGE BY SSPA</scope>
</reference>
<reference key="4">
    <citation type="journal article" date="1999" name="Mol. Gen. Genet.">
        <title>Interactive regulatory pathways control virulence determinant production and stability in response to environmental conditions in Staphylococcus aureus.</title>
        <authorList>
            <person name="Lindsay J.A."/>
            <person name="Foster S.J."/>
        </authorList>
    </citation>
    <scope>REGULATION</scope>
</reference>
<reference key="5">
    <citation type="journal article" date="2004" name="Microbiology">
        <title>The role and regulation of the extracellular proteases of Staphylococcus aureus.</title>
        <authorList>
            <person name="Shaw L."/>
            <person name="Golonka E."/>
            <person name="Potempa J."/>
            <person name="Foster S.J."/>
        </authorList>
    </citation>
    <scope>INDUCTION</scope>
</reference>
<reference key="6">
    <citation type="journal article" date="2005" name="J. Bacteriol.">
        <title>Cytoplasmic control of premature activation of a secreted protease zymogen: deletion of staphostatin B (sspC) in Staphylococcus aureus 8325-4 yields a profound pleiotropic phenotype.</title>
        <authorList>
            <person name="Shaw L.N."/>
            <person name="Golonka E."/>
            <person name="Szmyd G."/>
            <person name="Foster S.J."/>
            <person name="Travis J."/>
            <person name="Potempa J."/>
        </authorList>
    </citation>
    <scope>INHIBITION BY STAPHOSTATIN B</scope>
</reference>
<feature type="signal peptide" evidence="4">
    <location>
        <begin position="1"/>
        <end position="36"/>
    </location>
</feature>
<feature type="propeptide" id="PRO_0000247969">
    <location>
        <begin position="37"/>
        <end position="219"/>
    </location>
</feature>
<feature type="chain" id="PRO_0000247970" description="Staphopain B">
    <location>
        <begin position="220"/>
        <end position="393"/>
    </location>
</feature>
<feature type="active site" evidence="3">
    <location>
        <position position="243"/>
    </location>
</feature>
<feature type="active site" evidence="3">
    <location>
        <position position="340"/>
    </location>
</feature>
<feature type="active site" evidence="3">
    <location>
        <position position="360"/>
    </location>
</feature>
<feature type="site" description="Cleavage; by SspA">
    <location>
        <begin position="219"/>
        <end position="220"/>
    </location>
</feature>
<keyword id="KW-0903">Direct protein sequencing</keyword>
<keyword id="KW-0378">Hydrolase</keyword>
<keyword id="KW-0645">Protease</keyword>
<keyword id="KW-1185">Reference proteome</keyword>
<keyword id="KW-0964">Secreted</keyword>
<keyword id="KW-0732">Signal</keyword>
<keyword id="KW-0788">Thiol protease</keyword>
<keyword id="KW-0843">Virulence</keyword>
<keyword id="KW-0865">Zymogen</keyword>
<sequence length="393" mass="44519">MNSSCKSRVFNIISIIMVSMLILSLGAFANNNKAKADSHSKQLEINVKSDKVPQKVKDLAQQQFAGYAKALDKQSNAKTGKYELGEAFKIYKFNGEEDNSYYYPVIKDGKIVYTLTLSPKNKDDLNKSKEDMNYSVKISNFIAKDLDQIKDKNSNITVLTDEKGFYFEEDGKVRLVKATPLPGNVKEKESAKTVSAKLKQELKNTVTPTKVEENEAIQEDQVQYENTLKNFKIREQQFDNSWCAGFSMAALLNATKNTDTYNAHDIMRTLYPEVSEQDLPNCATFPNQMIEYGKSQGRDIHYQEGVPSYEQVDQLTKDNVGIMILAQSVSQNPNDPHLGHALAVVGNAKINDQEKLIYWNPWDTELSIQDADSSLLHLSFNRDYNWYGSMIGY</sequence>
<proteinExistence type="evidence at protein level"/>
<protein>
    <recommendedName>
        <fullName>Staphopain B</fullName>
        <ecNumber>3.4.22.-</ecNumber>
    </recommendedName>
    <alternativeName>
        <fullName>Staphylococcal cysteine proteinase B</fullName>
    </alternativeName>
    <alternativeName>
        <fullName>Staphylopain B</fullName>
    </alternativeName>
</protein>
<evidence type="ECO:0000250" key="1"/>
<evidence type="ECO:0000250" key="2">
    <source>
        <dbReference type="UniProtKB" id="P0C1S6"/>
    </source>
</evidence>
<evidence type="ECO:0000255" key="3">
    <source>
        <dbReference type="PROSITE-ProRule" id="PRU10089"/>
    </source>
</evidence>
<evidence type="ECO:0000269" key="4">
    <source>
    </source>
</evidence>
<evidence type="ECO:0000269" key="5">
    <source>
    </source>
</evidence>
<evidence type="ECO:0000269" key="6">
    <source>
    </source>
</evidence>
<evidence type="ECO:0000305" key="7"/>
<gene>
    <name type="primary">sspB</name>
    <name type="ordered locus">SAOUHSC_00987</name>
</gene>
<comment type="function">
    <text evidence="2">Cysteine protease that plays an important role in the inhibition of host innate immune response. Degrades host elastin, fibrogen, fibronectin and kininogen. Blocks phagocytosis of opsonised S.aureus by neutrophils and monocytes by inducing their death in a proteolytic activity-dependent manner. Decreases surface expression of the 'don't eat me' signal CD31 on neutrophils. Cleaves host galectin-3/LGALS3, thereby inhibiting the neutrophil-activating ability of the lectin.</text>
</comment>
<comment type="activity regulation">
    <text evidence="5">Prematurely activated/folded staphopain B is inhibited by staphostatin B (SspC), which is probably required to protect staphylococcal cytoplasmic proteins from degradation by SspB. Also inactivated by E-64 and stimulated by EDTA.</text>
</comment>
<comment type="subunit">
    <text evidence="1">In the cytoplasm, prematurely activated/folded SspB forms a stable non-covalent complex with SspC.</text>
</comment>
<comment type="subcellular location">
    <subcellularLocation>
        <location>Secreted</location>
    </subcellularLocation>
</comment>
<comment type="induction">
    <text evidence="6">Expression occurs in a growth phase-dependent manner with optimal expression at post-exponential phase. Environmental conditions such as degree of aeration and salt concentration are also important in control of transcription and processing of SspB. Up-regulated by agr (accessory gene regulator) and repressed by SarA (staphylococcal accessory regulator) and sigmaB factor.</text>
</comment>
<comment type="PTM">
    <text evidence="4 5">Proteolytically cleaved by staphylococcal serine protease (SspA).</text>
</comment>
<comment type="miscellaneous">
    <text>The cascade of activation of extracellular proteases proceeds from the metalloprotease aureolysin (aur), through SspA to SspB.</text>
</comment>
<comment type="similarity">
    <text evidence="7">Belongs to the peptidase C47 family.</text>
</comment>
<name>SSPB_STAA8</name>
<organism>
    <name type="scientific">Staphylococcus aureus (strain NCTC 8325 / PS 47)</name>
    <dbReference type="NCBI Taxonomy" id="93061"/>
    <lineage>
        <taxon>Bacteria</taxon>
        <taxon>Bacillati</taxon>
        <taxon>Bacillota</taxon>
        <taxon>Bacilli</taxon>
        <taxon>Bacillales</taxon>
        <taxon>Staphylococcaceae</taxon>
        <taxon>Staphylococcus</taxon>
    </lineage>
</organism>